<proteinExistence type="inferred from homology"/>
<reference key="1">
    <citation type="journal article" date="2008" name="Proc. Natl. Acad. Sci. U.S.A.">
        <title>Niche adaptation and genome expansion in the chlorophyll d-producing cyanobacterium Acaryochloris marina.</title>
        <authorList>
            <person name="Swingley W.D."/>
            <person name="Chen M."/>
            <person name="Cheung P.C."/>
            <person name="Conrad A.L."/>
            <person name="Dejesa L.C."/>
            <person name="Hao J."/>
            <person name="Honchak B.M."/>
            <person name="Karbach L.E."/>
            <person name="Kurdoglu A."/>
            <person name="Lahiri S."/>
            <person name="Mastrian S.D."/>
            <person name="Miyashita H."/>
            <person name="Page L."/>
            <person name="Ramakrishna P."/>
            <person name="Satoh S."/>
            <person name="Sattley W.M."/>
            <person name="Shimada Y."/>
            <person name="Taylor H.L."/>
            <person name="Tomo T."/>
            <person name="Tsuchiya T."/>
            <person name="Wang Z.T."/>
            <person name="Raymond J."/>
            <person name="Mimuro M."/>
            <person name="Blankenship R.E."/>
            <person name="Touchman J.W."/>
        </authorList>
    </citation>
    <scope>NUCLEOTIDE SEQUENCE [LARGE SCALE GENOMIC DNA]</scope>
    <source>
        <strain>MBIC 11017</strain>
    </source>
</reference>
<organism>
    <name type="scientific">Acaryochloris marina (strain MBIC 11017)</name>
    <dbReference type="NCBI Taxonomy" id="329726"/>
    <lineage>
        <taxon>Bacteria</taxon>
        <taxon>Bacillati</taxon>
        <taxon>Cyanobacteriota</taxon>
        <taxon>Cyanophyceae</taxon>
        <taxon>Acaryochloridales</taxon>
        <taxon>Acaryochloridaceae</taxon>
        <taxon>Acaryochloris</taxon>
    </lineage>
</organism>
<accession>B0C269</accession>
<dbReference type="EC" id="6.3.5.7" evidence="1"/>
<dbReference type="EMBL" id="CP000828">
    <property type="protein sequence ID" value="ABW28521.1"/>
    <property type="molecule type" value="Genomic_DNA"/>
</dbReference>
<dbReference type="RefSeq" id="WP_012163917.1">
    <property type="nucleotide sequence ID" value="NC_009925.1"/>
</dbReference>
<dbReference type="SMR" id="B0C269"/>
<dbReference type="STRING" id="329726.AM1_3531"/>
<dbReference type="KEGG" id="amr:AM1_3531"/>
<dbReference type="eggNOG" id="COG0154">
    <property type="taxonomic scope" value="Bacteria"/>
</dbReference>
<dbReference type="HOGENOM" id="CLU_009600_0_3_3"/>
<dbReference type="OrthoDB" id="9811471at2"/>
<dbReference type="Proteomes" id="UP000000268">
    <property type="component" value="Chromosome"/>
</dbReference>
<dbReference type="GO" id="GO:0030956">
    <property type="term" value="C:glutamyl-tRNA(Gln) amidotransferase complex"/>
    <property type="evidence" value="ECO:0007669"/>
    <property type="project" value="InterPro"/>
</dbReference>
<dbReference type="GO" id="GO:0005524">
    <property type="term" value="F:ATP binding"/>
    <property type="evidence" value="ECO:0007669"/>
    <property type="project" value="UniProtKB-KW"/>
</dbReference>
<dbReference type="GO" id="GO:0050567">
    <property type="term" value="F:glutaminyl-tRNA synthase (glutamine-hydrolyzing) activity"/>
    <property type="evidence" value="ECO:0007669"/>
    <property type="project" value="UniProtKB-UniRule"/>
</dbReference>
<dbReference type="GO" id="GO:0006412">
    <property type="term" value="P:translation"/>
    <property type="evidence" value="ECO:0007669"/>
    <property type="project" value="UniProtKB-UniRule"/>
</dbReference>
<dbReference type="Gene3D" id="3.90.1300.10">
    <property type="entry name" value="Amidase signature (AS) domain"/>
    <property type="match status" value="1"/>
</dbReference>
<dbReference type="HAMAP" id="MF_00120">
    <property type="entry name" value="GatA"/>
    <property type="match status" value="1"/>
</dbReference>
<dbReference type="InterPro" id="IPR000120">
    <property type="entry name" value="Amidase"/>
</dbReference>
<dbReference type="InterPro" id="IPR020556">
    <property type="entry name" value="Amidase_CS"/>
</dbReference>
<dbReference type="InterPro" id="IPR023631">
    <property type="entry name" value="Amidase_dom"/>
</dbReference>
<dbReference type="InterPro" id="IPR036928">
    <property type="entry name" value="AS_sf"/>
</dbReference>
<dbReference type="InterPro" id="IPR004412">
    <property type="entry name" value="GatA"/>
</dbReference>
<dbReference type="NCBIfam" id="TIGR00132">
    <property type="entry name" value="gatA"/>
    <property type="match status" value="1"/>
</dbReference>
<dbReference type="PANTHER" id="PTHR11895:SF151">
    <property type="entry name" value="GLUTAMYL-TRNA(GLN) AMIDOTRANSFERASE SUBUNIT A"/>
    <property type="match status" value="1"/>
</dbReference>
<dbReference type="PANTHER" id="PTHR11895">
    <property type="entry name" value="TRANSAMIDASE"/>
    <property type="match status" value="1"/>
</dbReference>
<dbReference type="Pfam" id="PF01425">
    <property type="entry name" value="Amidase"/>
    <property type="match status" value="1"/>
</dbReference>
<dbReference type="SUPFAM" id="SSF75304">
    <property type="entry name" value="Amidase signature (AS) enzymes"/>
    <property type="match status" value="1"/>
</dbReference>
<dbReference type="PROSITE" id="PS00571">
    <property type="entry name" value="AMIDASES"/>
    <property type="match status" value="1"/>
</dbReference>
<gene>
    <name evidence="1" type="primary">gatA</name>
    <name type="ordered locus">AM1_3531</name>
</gene>
<comment type="function">
    <text evidence="1">Allows the formation of correctly charged Gln-tRNA(Gln) through the transamidation of misacylated Glu-tRNA(Gln) in organisms which lack glutaminyl-tRNA synthetase. The reaction takes place in the presence of glutamine and ATP through an activated gamma-phospho-Glu-tRNA(Gln).</text>
</comment>
<comment type="catalytic activity">
    <reaction evidence="1">
        <text>L-glutamyl-tRNA(Gln) + L-glutamine + ATP + H2O = L-glutaminyl-tRNA(Gln) + L-glutamate + ADP + phosphate + H(+)</text>
        <dbReference type="Rhea" id="RHEA:17521"/>
        <dbReference type="Rhea" id="RHEA-COMP:9681"/>
        <dbReference type="Rhea" id="RHEA-COMP:9684"/>
        <dbReference type="ChEBI" id="CHEBI:15377"/>
        <dbReference type="ChEBI" id="CHEBI:15378"/>
        <dbReference type="ChEBI" id="CHEBI:29985"/>
        <dbReference type="ChEBI" id="CHEBI:30616"/>
        <dbReference type="ChEBI" id="CHEBI:43474"/>
        <dbReference type="ChEBI" id="CHEBI:58359"/>
        <dbReference type="ChEBI" id="CHEBI:78520"/>
        <dbReference type="ChEBI" id="CHEBI:78521"/>
        <dbReference type="ChEBI" id="CHEBI:456216"/>
        <dbReference type="EC" id="6.3.5.7"/>
    </reaction>
</comment>
<comment type="subunit">
    <text evidence="1">Heterotrimer of A, B and C subunits.</text>
</comment>
<comment type="similarity">
    <text evidence="1">Belongs to the amidase family. GatA subfamily.</text>
</comment>
<evidence type="ECO:0000255" key="1">
    <source>
        <dbReference type="HAMAP-Rule" id="MF_00120"/>
    </source>
</evidence>
<name>GATA_ACAM1</name>
<keyword id="KW-0067">ATP-binding</keyword>
<keyword id="KW-0436">Ligase</keyword>
<keyword id="KW-0547">Nucleotide-binding</keyword>
<keyword id="KW-0648">Protein biosynthesis</keyword>
<keyword id="KW-1185">Reference proteome</keyword>
<feature type="chain" id="PRO_1000076118" description="Glutamyl-tRNA(Gln) amidotransferase subunit A">
    <location>
        <begin position="1"/>
        <end position="482"/>
    </location>
</feature>
<feature type="active site" description="Charge relay system" evidence="1">
    <location>
        <position position="75"/>
    </location>
</feature>
<feature type="active site" description="Charge relay system" evidence="1">
    <location>
        <position position="150"/>
    </location>
</feature>
<feature type="active site" description="Acyl-ester intermediate" evidence="1">
    <location>
        <position position="174"/>
    </location>
</feature>
<sequence>MASIQALHQELITKERSAQEITEAALETIHQLEPKLHSFLAITADQALAQAKQVDAQLAAGEEIGLLAGIPIGIKDNMCTKGIATTCGSKILQNFIPPYESTVTQKLAAAGAVMVGKTNLDEFAMGSSTENSAYQVTGNPWDVSRVPGGSSGGSAAAVAADECVVSIGSDTGGSIRQPAALCGVVGLKPTYGLVSRFGLVAYASSLDQIGPFGRTVEDAAILLQEIAGYDPQDSTSLKVEIPDYSKSLIPDLKGKKVGVITETFGEGLDEVVEKVVRKAIDQLAELGAEVQEISCPRFRYGLPTYYVIAPSEASANLARYDGVKYGYRTDDPDDLMSMYTNTRAEGFGAEVKRRIMIGTYALSAGYYDAYYLKAQKVRTLIKEDFEKAFESVDVLVCPTTPTTAFKAGEKTADPLSMYLSDLMTIPVNLAGLPGLSLPCGFDDQGLPIGLQMIGNVLREDQVLQAAYAYEQSTEWHKASPKL</sequence>
<protein>
    <recommendedName>
        <fullName evidence="1">Glutamyl-tRNA(Gln) amidotransferase subunit A</fullName>
        <shortName evidence="1">Glu-ADT subunit A</shortName>
        <ecNumber evidence="1">6.3.5.7</ecNumber>
    </recommendedName>
</protein>